<accession>B3SRR9</accession>
<sequence>MASLIYRQLLTNSYSVDLHDEIEQIGSEKTQNVTINPGPFAQTRYAPVNWGHGEINDSTTVEPILDGPYQSTTFTPPNGYWILINSNTNGVVYESTNNSDFWTAVVAIEPHVNPVDRQYTIFGESKQFNVSNDSNKWKFLEMFRSSSQNDFYNRRTLTSDTRLVGILKYGGRVWTFHGETPRATTNGSSTANLNNISITIHSEFYIIPRSQESKCNEYINNGLPPIQNTRNVVPLPLSSRSIQYKRAQVNEDIIVSKTSLWKEMQYNRDIIIRFKFGNSIVKMGGLGYKWSEISYKVANYQYNYLRDGEQVTAHTTCSVNGVNNFSYNGGSLPTDFGISRYEVIKENSYVYVDYWDDSKAFRNMVYVRSLAANLNSVKCTGGSYAFSIPVGAWPIMNGGAVSLHFAGVTLSTQFTDFVSLNSLRFRFSLTVDEPPFSILRTRTVNLYGLPAANPNNGNEYYEISGRFSLISLVSTNDDYQTPIMNSVTVRQDLERQLTDLREEFNSLSQEIAMAQLIDLALLPLDMFSMFSGIKSTIDLTKSMATSVMKKFRKSKLATSISEMTNSLSDAASSASRNVSIRSNLSAISNWTNVSNDVSNVTNSLNDISTQTSTISKKLRLKEMITQTEGMSFDDISAAVLKTKIDMSTQIGKNTLPDIVTEASEKFIPKRSYRILKDDEVMEINTEGKFFAYKINTFDEVPFDVNKFAELVTDSPVISAIIDFKTLKNLNDNYGITRTEALNLIKSNPNMLRNFINQNNPIIRNRIEQLILQCKL</sequence>
<dbReference type="EMBL" id="EF672570">
    <property type="protein sequence ID" value="ABV53244.1"/>
    <property type="molecule type" value="Genomic_RNA"/>
</dbReference>
<dbReference type="SMR" id="B3SRR9"/>
<dbReference type="Proteomes" id="UP000006368">
    <property type="component" value="Genome"/>
</dbReference>
<dbReference type="GO" id="GO:0044172">
    <property type="term" value="C:host cell endoplasmic reticulum-Golgi intermediate compartment"/>
    <property type="evidence" value="ECO:0007669"/>
    <property type="project" value="UniProtKB-SubCell"/>
</dbReference>
<dbReference type="GO" id="GO:0020002">
    <property type="term" value="C:host cell plasma membrane"/>
    <property type="evidence" value="ECO:0007669"/>
    <property type="project" value="UniProtKB-SubCell"/>
</dbReference>
<dbReference type="GO" id="GO:0044168">
    <property type="term" value="C:host cell rough endoplasmic reticulum"/>
    <property type="evidence" value="ECO:0007669"/>
    <property type="project" value="UniProtKB-SubCell"/>
</dbReference>
<dbReference type="GO" id="GO:0044163">
    <property type="term" value="C:host cytoskeleton"/>
    <property type="evidence" value="ECO:0007669"/>
    <property type="project" value="UniProtKB-SubCell"/>
</dbReference>
<dbReference type="GO" id="GO:0016020">
    <property type="term" value="C:membrane"/>
    <property type="evidence" value="ECO:0007669"/>
    <property type="project" value="UniProtKB-KW"/>
</dbReference>
<dbReference type="GO" id="GO:0039624">
    <property type="term" value="C:viral outer capsid"/>
    <property type="evidence" value="ECO:0007669"/>
    <property type="project" value="UniProtKB-UniRule"/>
</dbReference>
<dbReference type="GO" id="GO:0039665">
    <property type="term" value="P:permeabilization of host organelle membrane involved in viral entry into host cell"/>
    <property type="evidence" value="ECO:0007669"/>
    <property type="project" value="UniProtKB-UniRule"/>
</dbReference>
<dbReference type="GO" id="GO:0019062">
    <property type="term" value="P:virion attachment to host cell"/>
    <property type="evidence" value="ECO:0007669"/>
    <property type="project" value="UniProtKB-UniRule"/>
</dbReference>
<dbReference type="FunFam" id="2.60.120.200:FF:000303">
    <property type="entry name" value="Outer capsid protein VP4"/>
    <property type="match status" value="1"/>
</dbReference>
<dbReference type="Gene3D" id="1.20.5.170">
    <property type="match status" value="1"/>
</dbReference>
<dbReference type="Gene3D" id="2.60.120.200">
    <property type="match status" value="1"/>
</dbReference>
<dbReference type="HAMAP" id="MF_04132">
    <property type="entry name" value="Rota_A_VP4"/>
    <property type="match status" value="1"/>
</dbReference>
<dbReference type="HAMAP" id="MF_04125">
    <property type="entry name" value="Rota_VP4"/>
    <property type="match status" value="1"/>
</dbReference>
<dbReference type="InterPro" id="IPR013320">
    <property type="entry name" value="ConA-like_dom_sf"/>
</dbReference>
<dbReference type="InterPro" id="IPR042546">
    <property type="entry name" value="Rota_A_VP4"/>
</dbReference>
<dbReference type="InterPro" id="IPR035330">
    <property type="entry name" value="Rota_VP4_MID"/>
</dbReference>
<dbReference type="InterPro" id="IPR038017">
    <property type="entry name" value="Rota_VP4_MID_sf"/>
</dbReference>
<dbReference type="InterPro" id="IPR000416">
    <property type="entry name" value="VP4_concanavalin-like"/>
</dbReference>
<dbReference type="InterPro" id="IPR035329">
    <property type="entry name" value="VP4_helical"/>
</dbReference>
<dbReference type="Pfam" id="PF17477">
    <property type="entry name" value="Rota_VP4_MID"/>
    <property type="match status" value="1"/>
</dbReference>
<dbReference type="Pfam" id="PF00426">
    <property type="entry name" value="VP4_haemagglut"/>
    <property type="match status" value="1"/>
</dbReference>
<dbReference type="Pfam" id="PF17478">
    <property type="entry name" value="VP4_helical"/>
    <property type="match status" value="1"/>
</dbReference>
<dbReference type="SUPFAM" id="SSF49899">
    <property type="entry name" value="Concanavalin A-like lectins/glucanases"/>
    <property type="match status" value="1"/>
</dbReference>
<dbReference type="SUPFAM" id="SSF111379">
    <property type="entry name" value="VP4 membrane interaction domain"/>
    <property type="match status" value="1"/>
</dbReference>
<keyword id="KW-0167">Capsid protein</keyword>
<keyword id="KW-0175">Coiled coil</keyword>
<keyword id="KW-1015">Disulfide bond</keyword>
<keyword id="KW-0348">Hemagglutinin</keyword>
<keyword id="KW-1032">Host cell membrane</keyword>
<keyword id="KW-1035">Host cytoplasm</keyword>
<keyword id="KW-1037">Host cytoskeleton</keyword>
<keyword id="KW-1038">Host endoplasmic reticulum</keyword>
<keyword id="KW-1043">Host membrane</keyword>
<keyword id="KW-0945">Host-virus interaction</keyword>
<keyword id="KW-0472">Membrane</keyword>
<keyword id="KW-1152">Outer capsid protein</keyword>
<keyword id="KW-1185">Reference proteome</keyword>
<keyword id="KW-1161">Viral attachment to host cell</keyword>
<keyword id="KW-1162">Viral penetration into host cytoplasm</keyword>
<keyword id="KW-1173">Viral penetration via permeabilization of host membrane</keyword>
<keyword id="KW-0946">Virion</keyword>
<keyword id="KW-1160">Virus entry into host cell</keyword>
<organism>
    <name type="scientific">Rotavirus A (strain RVA/Human/United States/D/1974/G1P1A[8])</name>
    <name type="common">RV-A</name>
    <dbReference type="NCBI Taxonomy" id="578831"/>
    <lineage>
        <taxon>Viruses</taxon>
        <taxon>Riboviria</taxon>
        <taxon>Orthornavirae</taxon>
        <taxon>Duplornaviricota</taxon>
        <taxon>Resentoviricetes</taxon>
        <taxon>Reovirales</taxon>
        <taxon>Sedoreoviridae</taxon>
        <taxon>Rotavirus</taxon>
        <taxon>Rotavirus A</taxon>
    </lineage>
</organism>
<protein>
    <recommendedName>
        <fullName evidence="1">Outer capsid protein VP4</fullName>
    </recommendedName>
    <alternativeName>
        <fullName evidence="1">Hemagglutinin</fullName>
    </alternativeName>
    <component>
        <recommendedName>
            <fullName evidence="1">Outer capsid protein VP8*</fullName>
        </recommendedName>
    </component>
    <component>
        <recommendedName>
            <fullName evidence="1">Outer capsid protein VP5*</fullName>
        </recommendedName>
    </component>
</protein>
<comment type="function">
    <molecule>Outer capsid protein VP4</molecule>
    <text evidence="1">Spike-forming protein that mediates virion attachment to the host epithelial cell receptors and plays a major role in cell penetration, determination of host range restriction and virulence. Rotavirus attachment and entry into the host cell probably involves multiple sequential contacts between the outer capsid proteins VP4 and VP7, and the cell receptors. It is subsequently lost, together with VP7, following virus entry into the host cell. Following entry into the host cell, low intracellular or intravesicular Ca(2+) concentration probably causes the calcium-stabilized VP7 trimers to dissociate from the virion. This step is probably necessary for the membrane-disrupting entry step and the release of VP4, which is locked onto the virion by VP7. During the virus exit from the host cell, VP4 seems to be required to target the newly formed virions to the host cell lipid rafts.</text>
</comment>
<comment type="function">
    <molecule>Outer capsid protein VP5*</molecule>
    <text evidence="1">Forms the spike 'foot' and 'body' and acts as a membrane permeabilization protein that mediates release of viral particles from endosomal compartments into the cytoplasm. During entry, the part of VP5* that protrudes from the virus folds back on itself and reorganizes from a local dimer to a trimer. This reorganization may be linked to membrane penetration by exposing VP5* hydrophobic region. In integrin-dependent strains, VP5* targets the integrin heterodimer ITGA2/ITGB1 for cell attachment.</text>
</comment>
<comment type="function">
    <molecule>Outer capsid protein VP8*</molecule>
    <text evidence="1">Forms the head of the spikes and mediates the recognition of specific host cell surface glycans. It is the viral hemagglutinin and an important target of neutralizing antibodies. In sialic acid-dependent strains, VP8* binds to host cell sialic acid, most probably a ganglioside, providing the initial contact. In some other strains, VP8* mediates the attachment to histo-blood group antigens (HBGAs) for viral entry.</text>
</comment>
<comment type="subunit">
    <molecule>Outer capsid protein VP4</molecule>
    <text evidence="1">Homotrimer. VP4 adopts a dimeric appearance above the capsid surface, while forming a trimeric base anchored inside the capsid layer. Only hints of the third molecule are observed above the capsid surface. It probably performs a series of molecular rearrangements during viral entry. Prior to trypsin cleavage, it is flexible. The priming trypsin cleavage triggers its rearrangement into rigid spikes with approximate two-fold symmetry of their protruding parts. After an unknown second triggering event, cleaved VP4 may undergo another rearrangement, in which two VP5* subunits fold back on themselves and join a third subunit to form a tightly associated trimer, shaped like a folded umbrella. Interacts with VP6. Interacts with VP7.</text>
</comment>
<comment type="subunit">
    <molecule>Outer capsid protein VP5*</molecule>
    <text evidence="1">Homotrimer. The trimer is coiled-coil stabilized by its C-terminus, however, its N-terminus, known as antigen domain or 'body', seems to be flexible allowing it to self-associate either as a dimer or a trimer.</text>
</comment>
<comment type="subcellular location">
    <molecule>Outer capsid protein VP4</molecule>
    <subcellularLocation>
        <location evidence="1">Virion</location>
    </subcellularLocation>
    <subcellularLocation>
        <location evidence="1">Host rough endoplasmic reticulum</location>
    </subcellularLocation>
    <subcellularLocation>
        <location evidence="1">Host cell membrane</location>
    </subcellularLocation>
    <subcellularLocation>
        <location evidence="1">Host cytoplasm</location>
        <location evidence="1">Host cytoskeleton</location>
    </subcellularLocation>
    <subcellularLocation>
        <location evidence="1">Host endoplasmic reticulum-Golgi intermediate compartment</location>
    </subcellularLocation>
    <text evidence="1">The outer layer contains 180 copies of VP4, grouped as 60 dimers. Immature double-layered particles assembled in the cytoplasm bud across the membrane of the endoplasmic reticulum, acquiring during this process a transient lipid membrane that is modified with the ER resident viral glycoproteins NSP4 and VP7; these enveloped particles also contain VP4. As the particles move towards the interior of the ER cisternae, the transient lipid membrane and the non-structural protein NSP4 are lost, while the virus surface proteins VP4 and VP7 rearrange to form the outermost virus protein layer, yielding mature infectious triple-layered particles. VP4 also seems to associate with lipid rafts of the host cell membrane probably for the exit of the virus from the infected cell by an alternate pathway.</text>
</comment>
<comment type="subcellular location">
    <molecule>Outer capsid protein VP8*</molecule>
    <subcellularLocation>
        <location evidence="1">Virion</location>
    </subcellularLocation>
    <text evidence="1">Outer capsid protein.</text>
</comment>
<comment type="subcellular location">
    <molecule>Outer capsid protein VP5*</molecule>
    <subcellularLocation>
        <location evidence="1">Virion</location>
    </subcellularLocation>
    <text evidence="1">Outer capsid protein.</text>
</comment>
<comment type="domain">
    <molecule>Outer capsid protein VP4</molecule>
    <text evidence="1">The VP4 spike is divided into a foot, a stalk and body, and a head.</text>
</comment>
<comment type="PTM">
    <molecule>Outer capsid protein VP4</molecule>
    <text evidence="1">Proteolytic cleavage by trypsin results in activation of VP4 functions and greatly increases infectivity. The penetration into the host cell is dependent on trypsin treatment of VP4. It produces two peptides, VP5* and VP8* that remain associated with the virion. Cleavage of VP4 by trypsin probably occurs in vivo in the lumen of the intestine prior to infection of enterocytes. Trypsin seems to be incorporated into the three-layered viral particles but remains inactive as long as the viral outer capsid is intact and would only be activated upon the solubilization of the latter.</text>
</comment>
<comment type="miscellaneous">
    <text evidence="2">This strain probably does not use sialic acid to attach to the host cell.</text>
</comment>
<comment type="miscellaneous">
    <text evidence="1">In group A rotaviruses, VP4 defines the P serotype.</text>
</comment>
<comment type="miscellaneous">
    <text evidence="1">Some rotavirus strains are neuraminidase-sensitive and require sialic acid to attach to the cell surface. Some rotavirus strains are integrin-dependent. Some rotavirus strains depend on ganglioside for their entry into the host cell. Hsp70 also seems to be involved in the entry of some strains.</text>
</comment>
<comment type="similarity">
    <text evidence="1">Belongs to the rotavirus VP4 family.</text>
</comment>
<name>VP4_ROTAD</name>
<proteinExistence type="inferred from homology"/>
<reference key="1">
    <citation type="journal article" date="2008" name="J. Virol.">
        <title>Group A human rotavirus genomics: evidence that gene constellations are influenced by viral protein interactions.</title>
        <authorList>
            <person name="Heiman E.M."/>
            <person name="McDonald S.M."/>
            <person name="Barro M."/>
            <person name="Taraporewala Z.F."/>
            <person name="Bar-Magen T."/>
            <person name="Patton J.T."/>
        </authorList>
    </citation>
    <scope>NUCLEOTIDE SEQUENCE [GENOMIC RNA]</scope>
</reference>
<reference key="2">
    <citation type="journal article" date="2006" name="Glycoconj. J.">
        <title>Role of sialic acids in rotavirus infection.</title>
        <authorList>
            <person name="Isa P."/>
            <person name="Arias C.F."/>
            <person name="Lopez S."/>
        </authorList>
    </citation>
    <scope>REVIEW</scope>
</reference>
<evidence type="ECO:0000255" key="1">
    <source>
        <dbReference type="HAMAP-Rule" id="MF_04132"/>
    </source>
</evidence>
<evidence type="ECO:0000303" key="2">
    <source>
    </source>
</evidence>
<organismHost>
    <name type="scientific">Homo sapiens</name>
    <name type="common">Human</name>
    <dbReference type="NCBI Taxonomy" id="9606"/>
</organismHost>
<feature type="chain" id="PRO_0000368147" description="Outer capsid protein VP4" evidence="1">
    <location>
        <begin position="1"/>
        <end position="775"/>
    </location>
</feature>
<feature type="chain" id="PRO_0000368148" description="Outer capsid protein VP8*" evidence="1">
    <location>
        <begin position="1"/>
        <end position="230"/>
    </location>
</feature>
<feature type="chain" id="PRO_0000368149" description="Outer capsid protein VP5*" evidence="1">
    <location>
        <begin position="247"/>
        <end position="775"/>
    </location>
</feature>
<feature type="region of interest" description="Spike head" evidence="1">
    <location>
        <begin position="65"/>
        <end position="223"/>
    </location>
</feature>
<feature type="region of interest" description="Spike body and stalk (antigen domain)" evidence="1">
    <location>
        <begin position="247"/>
        <end position="478"/>
    </location>
</feature>
<feature type="region of interest" description="Hydrophobic; possible role in virus entry into host cell" evidence="1">
    <location>
        <begin position="388"/>
        <end position="408"/>
    </location>
</feature>
<feature type="region of interest" description="Spike foot" evidence="1">
    <location>
        <begin position="509"/>
        <end position="775"/>
    </location>
</feature>
<feature type="coiled-coil region" evidence="1">
    <location>
        <begin position="483"/>
        <end position="517"/>
    </location>
</feature>
<feature type="short sequence motif" description="DGE motif; interaction with ITGA2/ITGB1 heterodimer" evidence="1">
    <location>
        <begin position="307"/>
        <end position="309"/>
    </location>
</feature>
<feature type="short sequence motif" description="YGL motif; interaction with ITGA4" evidence="1">
    <location>
        <begin position="447"/>
        <end position="449"/>
    </location>
</feature>
<feature type="short sequence motif" description="KID motif; interaction with HSPA8" evidence="1">
    <location>
        <begin position="643"/>
        <end position="645"/>
    </location>
</feature>
<feature type="site" description="Cleavage" evidence="1">
    <location>
        <begin position="230"/>
        <end position="231"/>
    </location>
</feature>
<feature type="site" description="Cleavage" evidence="1">
    <location>
        <begin position="240"/>
        <end position="241"/>
    </location>
</feature>
<feature type="site" description="Cleavage; associated with enhancement of infectivity" evidence="1">
    <location>
        <begin position="246"/>
        <end position="247"/>
    </location>
</feature>
<feature type="disulfide bond" evidence="1">
    <location>
        <begin position="317"/>
        <end position="379"/>
    </location>
</feature>